<comment type="subcellular location">
    <subcellularLocation>
        <location evidence="2">Cell membrane</location>
        <topology evidence="2">Multi-pass membrane protein</topology>
    </subcellularLocation>
</comment>
<evidence type="ECO:0000255" key="1"/>
<evidence type="ECO:0000305" key="2"/>
<sequence>MELLTNFPLLSSLAAIIFAQVIKVPIQFIVSRKLDWSLVTSTGGMPSSHSAAVTALSTGVALEHGLDSSLFAVSAIFAVITMFDATGVRRHAGEQATVINKLVIDFNRFVNEAKDFPKAAEKEKQKKLKELLGHQPIEVFFGGLTGILLTLVLAYFFM</sequence>
<feature type="chain" id="PRO_0000388977" description="Uncharacterized membrane protein YuiD">
    <location>
        <begin position="1"/>
        <end position="158"/>
    </location>
</feature>
<feature type="transmembrane region" description="Helical" evidence="1">
    <location>
        <begin position="10"/>
        <end position="30"/>
    </location>
</feature>
<feature type="transmembrane region" description="Helical" evidence="1">
    <location>
        <begin position="137"/>
        <end position="157"/>
    </location>
</feature>
<reference key="1">
    <citation type="journal article" date="1997" name="Nature">
        <title>The complete genome sequence of the Gram-positive bacterium Bacillus subtilis.</title>
        <authorList>
            <person name="Kunst F."/>
            <person name="Ogasawara N."/>
            <person name="Moszer I."/>
            <person name="Albertini A.M."/>
            <person name="Alloni G."/>
            <person name="Azevedo V."/>
            <person name="Bertero M.G."/>
            <person name="Bessieres P."/>
            <person name="Bolotin A."/>
            <person name="Borchert S."/>
            <person name="Borriss R."/>
            <person name="Boursier L."/>
            <person name="Brans A."/>
            <person name="Braun M."/>
            <person name="Brignell S.C."/>
            <person name="Bron S."/>
            <person name="Brouillet S."/>
            <person name="Bruschi C.V."/>
            <person name="Caldwell B."/>
            <person name="Capuano V."/>
            <person name="Carter N.M."/>
            <person name="Choi S.-K."/>
            <person name="Codani J.-J."/>
            <person name="Connerton I.F."/>
            <person name="Cummings N.J."/>
            <person name="Daniel R.A."/>
            <person name="Denizot F."/>
            <person name="Devine K.M."/>
            <person name="Duesterhoeft A."/>
            <person name="Ehrlich S.D."/>
            <person name="Emmerson P.T."/>
            <person name="Entian K.-D."/>
            <person name="Errington J."/>
            <person name="Fabret C."/>
            <person name="Ferrari E."/>
            <person name="Foulger D."/>
            <person name="Fritz C."/>
            <person name="Fujita M."/>
            <person name="Fujita Y."/>
            <person name="Fuma S."/>
            <person name="Galizzi A."/>
            <person name="Galleron N."/>
            <person name="Ghim S.-Y."/>
            <person name="Glaser P."/>
            <person name="Goffeau A."/>
            <person name="Golightly E.J."/>
            <person name="Grandi G."/>
            <person name="Guiseppi G."/>
            <person name="Guy B.J."/>
            <person name="Haga K."/>
            <person name="Haiech J."/>
            <person name="Harwood C.R."/>
            <person name="Henaut A."/>
            <person name="Hilbert H."/>
            <person name="Holsappel S."/>
            <person name="Hosono S."/>
            <person name="Hullo M.-F."/>
            <person name="Itaya M."/>
            <person name="Jones L.-M."/>
            <person name="Joris B."/>
            <person name="Karamata D."/>
            <person name="Kasahara Y."/>
            <person name="Klaerr-Blanchard M."/>
            <person name="Klein C."/>
            <person name="Kobayashi Y."/>
            <person name="Koetter P."/>
            <person name="Koningstein G."/>
            <person name="Krogh S."/>
            <person name="Kumano M."/>
            <person name="Kurita K."/>
            <person name="Lapidus A."/>
            <person name="Lardinois S."/>
            <person name="Lauber J."/>
            <person name="Lazarevic V."/>
            <person name="Lee S.-M."/>
            <person name="Levine A."/>
            <person name="Liu H."/>
            <person name="Masuda S."/>
            <person name="Mauel C."/>
            <person name="Medigue C."/>
            <person name="Medina N."/>
            <person name="Mellado R.P."/>
            <person name="Mizuno M."/>
            <person name="Moestl D."/>
            <person name="Nakai S."/>
            <person name="Noback M."/>
            <person name="Noone D."/>
            <person name="O'Reilly M."/>
            <person name="Ogawa K."/>
            <person name="Ogiwara A."/>
            <person name="Oudega B."/>
            <person name="Park S.-H."/>
            <person name="Parro V."/>
            <person name="Pohl T.M."/>
            <person name="Portetelle D."/>
            <person name="Porwollik S."/>
            <person name="Prescott A.M."/>
            <person name="Presecan E."/>
            <person name="Pujic P."/>
            <person name="Purnelle B."/>
            <person name="Rapoport G."/>
            <person name="Rey M."/>
            <person name="Reynolds S."/>
            <person name="Rieger M."/>
            <person name="Rivolta C."/>
            <person name="Rocha E."/>
            <person name="Roche B."/>
            <person name="Rose M."/>
            <person name="Sadaie Y."/>
            <person name="Sato T."/>
            <person name="Scanlan E."/>
            <person name="Schleich S."/>
            <person name="Schroeter R."/>
            <person name="Scoffone F."/>
            <person name="Sekiguchi J."/>
            <person name="Sekowska A."/>
            <person name="Seror S.J."/>
            <person name="Serror P."/>
            <person name="Shin B.-S."/>
            <person name="Soldo B."/>
            <person name="Sorokin A."/>
            <person name="Tacconi E."/>
            <person name="Takagi T."/>
            <person name="Takahashi H."/>
            <person name="Takemaru K."/>
            <person name="Takeuchi M."/>
            <person name="Tamakoshi A."/>
            <person name="Tanaka T."/>
            <person name="Terpstra P."/>
            <person name="Tognoni A."/>
            <person name="Tosato V."/>
            <person name="Uchiyama S."/>
            <person name="Vandenbol M."/>
            <person name="Vannier F."/>
            <person name="Vassarotti A."/>
            <person name="Viari A."/>
            <person name="Wambutt R."/>
            <person name="Wedler E."/>
            <person name="Wedler H."/>
            <person name="Weitzenegger T."/>
            <person name="Winters P."/>
            <person name="Wipat A."/>
            <person name="Yamamoto H."/>
            <person name="Yamane K."/>
            <person name="Yasumoto K."/>
            <person name="Yata K."/>
            <person name="Yoshida K."/>
            <person name="Yoshikawa H.-F."/>
            <person name="Zumstein E."/>
            <person name="Yoshikawa H."/>
            <person name="Danchin A."/>
        </authorList>
    </citation>
    <scope>NUCLEOTIDE SEQUENCE [LARGE SCALE GENOMIC DNA]</scope>
    <source>
        <strain>168</strain>
    </source>
</reference>
<accession>O32107</accession>
<dbReference type="EMBL" id="AL009126">
    <property type="protein sequence ID" value="CAB15196.1"/>
    <property type="molecule type" value="Genomic_DNA"/>
</dbReference>
<dbReference type="PIR" id="E70012">
    <property type="entry name" value="E70012"/>
</dbReference>
<dbReference type="RefSeq" id="NP_391086.1">
    <property type="nucleotide sequence ID" value="NC_000964.3"/>
</dbReference>
<dbReference type="RefSeq" id="WP_003244337.1">
    <property type="nucleotide sequence ID" value="NZ_OZ025638.1"/>
</dbReference>
<dbReference type="SMR" id="O32107"/>
<dbReference type="FunCoup" id="O32107">
    <property type="interactions" value="38"/>
</dbReference>
<dbReference type="STRING" id="224308.BSU32060"/>
<dbReference type="PaxDb" id="224308-BSU32060"/>
<dbReference type="EnsemblBacteria" id="CAB15196">
    <property type="protein sequence ID" value="CAB15196"/>
    <property type="gene ID" value="BSU_32060"/>
</dbReference>
<dbReference type="GeneID" id="936516"/>
<dbReference type="KEGG" id="bsu:BSU32060"/>
<dbReference type="PATRIC" id="fig|224308.179.peg.3472"/>
<dbReference type="eggNOG" id="COG1963">
    <property type="taxonomic scope" value="Bacteria"/>
</dbReference>
<dbReference type="InParanoid" id="O32107"/>
<dbReference type="OrthoDB" id="9792681at2"/>
<dbReference type="PhylomeDB" id="O32107"/>
<dbReference type="BioCyc" id="BSUB:BSU32060-MONOMER"/>
<dbReference type="Proteomes" id="UP000001570">
    <property type="component" value="Chromosome"/>
</dbReference>
<dbReference type="GO" id="GO:0005886">
    <property type="term" value="C:plasma membrane"/>
    <property type="evidence" value="ECO:0007669"/>
    <property type="project" value="UniProtKB-SubCell"/>
</dbReference>
<dbReference type="InterPro" id="IPR003832">
    <property type="entry name" value="DUF212"/>
</dbReference>
<dbReference type="PANTHER" id="PTHR31446">
    <property type="entry name" value="ACID PHOSPHATASE/VANADIUM-DEPENDENT HALOPEROXIDASE-RELATED PROTEIN"/>
    <property type="match status" value="1"/>
</dbReference>
<dbReference type="PANTHER" id="PTHR31446:SF29">
    <property type="entry name" value="ACID PHOSPHATASE_VANADIUM-DEPENDENT HALOPEROXIDASE-RELATED PROTEIN"/>
    <property type="match status" value="1"/>
</dbReference>
<dbReference type="Pfam" id="PF02681">
    <property type="entry name" value="DUF212"/>
    <property type="match status" value="1"/>
</dbReference>
<gene>
    <name type="primary">yuiD</name>
    <name type="ordered locus">BSU32060</name>
</gene>
<proteinExistence type="predicted"/>
<organism>
    <name type="scientific">Bacillus subtilis (strain 168)</name>
    <dbReference type="NCBI Taxonomy" id="224308"/>
    <lineage>
        <taxon>Bacteria</taxon>
        <taxon>Bacillati</taxon>
        <taxon>Bacillota</taxon>
        <taxon>Bacilli</taxon>
        <taxon>Bacillales</taxon>
        <taxon>Bacillaceae</taxon>
        <taxon>Bacillus</taxon>
    </lineage>
</organism>
<name>YUID_BACSU</name>
<protein>
    <recommendedName>
        <fullName>Uncharacterized membrane protein YuiD</fullName>
    </recommendedName>
</protein>
<keyword id="KW-1003">Cell membrane</keyword>
<keyword id="KW-0472">Membrane</keyword>
<keyword id="KW-1185">Reference proteome</keyword>
<keyword id="KW-0812">Transmembrane</keyword>
<keyword id="KW-1133">Transmembrane helix</keyword>